<comment type="function">
    <text evidence="1">Involved in pre-rRNA and tRNA processing. Utilizes the methyl donor S-adenosyl-L-methionine to catalyze the site-specific 2'-hydroxyl methylation of ribose moieties in rRNA and tRNA. Site specificity is provided by a guide RNA that base pairs with the substrate. Methylation occurs at a characteristic distance from the sequence involved in base pairing with the guide RNA.</text>
</comment>
<comment type="subunit">
    <text evidence="1">Interacts with nop5. Component of box C/D small ribonucleoprotein (sRNP) particles that contain rpl7ae, FlpA and nop5, plus a guide RNA.</text>
</comment>
<comment type="similarity">
    <text evidence="1">Belongs to the methyltransferase superfamily. Fibrillarin family.</text>
</comment>
<reference key="1">
    <citation type="journal article" date="2004" name="Proc. Natl. Acad. Sci. U.S.A.">
        <title>Genome sequence of Picrophilus torridus and its implications for life around pH 0.</title>
        <authorList>
            <person name="Fuetterer O."/>
            <person name="Angelov A."/>
            <person name="Liesegang H."/>
            <person name="Gottschalk G."/>
            <person name="Schleper C."/>
            <person name="Schepers B."/>
            <person name="Dock C."/>
            <person name="Antranikian G."/>
            <person name="Liebl W."/>
        </authorList>
    </citation>
    <scope>NUCLEOTIDE SEQUENCE [LARGE SCALE GENOMIC DNA]</scope>
    <source>
        <strain>ATCC 700027 / DSM 9790 / JCM 10055 / NBRC 100828 / KAW 2/3</strain>
    </source>
</reference>
<feature type="chain" id="PRO_0000148542" description="Fibrillarin-like rRNA/tRNA 2'-O-methyltransferase">
    <location>
        <begin position="1"/>
        <end position="212"/>
    </location>
</feature>
<feature type="binding site" evidence="1">
    <location>
        <begin position="76"/>
        <end position="77"/>
    </location>
    <ligand>
        <name>S-adenosyl-L-methionine</name>
        <dbReference type="ChEBI" id="CHEBI:59789"/>
    </ligand>
</feature>
<feature type="binding site" evidence="1">
    <location>
        <begin position="94"/>
        <end position="95"/>
    </location>
    <ligand>
        <name>S-adenosyl-L-methionine</name>
        <dbReference type="ChEBI" id="CHEBI:59789"/>
    </ligand>
</feature>
<feature type="binding site" evidence="1">
    <location>
        <begin position="119"/>
        <end position="120"/>
    </location>
    <ligand>
        <name>S-adenosyl-L-methionine</name>
        <dbReference type="ChEBI" id="CHEBI:59789"/>
    </ligand>
</feature>
<feature type="binding site" evidence="1">
    <location>
        <begin position="139"/>
        <end position="142"/>
    </location>
    <ligand>
        <name>S-adenosyl-L-methionine</name>
        <dbReference type="ChEBI" id="CHEBI:59789"/>
    </ligand>
</feature>
<evidence type="ECO:0000255" key="1">
    <source>
        <dbReference type="HAMAP-Rule" id="MF_00351"/>
    </source>
</evidence>
<protein>
    <recommendedName>
        <fullName evidence="1">Fibrillarin-like rRNA/tRNA 2'-O-methyltransferase</fullName>
        <ecNumber evidence="1">2.1.1.-</ecNumber>
    </recommendedName>
</protein>
<proteinExistence type="inferred from homology"/>
<accession>Q6KZQ5</accession>
<organism>
    <name type="scientific">Picrophilus torridus (strain ATCC 700027 / DSM 9790 / JCM 10055 / NBRC 100828 / KAW 2/3)</name>
    <dbReference type="NCBI Taxonomy" id="1122961"/>
    <lineage>
        <taxon>Archaea</taxon>
        <taxon>Methanobacteriati</taxon>
        <taxon>Thermoplasmatota</taxon>
        <taxon>Thermoplasmata</taxon>
        <taxon>Thermoplasmatales</taxon>
        <taxon>Picrophilaceae</taxon>
        <taxon>Picrophilus</taxon>
    </lineage>
</organism>
<sequence length="212" mass="24955">MQEIFNRIFRDNKSIYTLSENNKRVYGEKIIRKKNSYLREWDPRRSKLAAAILKGFKHANFDKKLNILYLGASTGTTVSHLSDICISGRLYAVELSYDSFVKLYSLSQARNNIFPILEDANLVERYKFFVEKCDFIYQDIAQRNQVQIFNQNADIFKPRSAILIIKIKAISSKEPEKKILKETISSIRKYNIKEIIDLRPYDIGNYLVYMER</sequence>
<keyword id="KW-0489">Methyltransferase</keyword>
<keyword id="KW-0694">RNA-binding</keyword>
<keyword id="KW-0698">rRNA processing</keyword>
<keyword id="KW-0808">Transferase</keyword>
<keyword id="KW-0819">tRNA processing</keyword>
<name>FLPA_PICTO</name>
<gene>
    <name evidence="1" type="primary">flpA</name>
    <name type="ordered locus">PTO1212</name>
</gene>
<dbReference type="EC" id="2.1.1.-" evidence="1"/>
<dbReference type="EMBL" id="AE017261">
    <property type="protein sequence ID" value="AAT43797.1"/>
    <property type="molecule type" value="Genomic_DNA"/>
</dbReference>
<dbReference type="RefSeq" id="WP_011178013.1">
    <property type="nucleotide sequence ID" value="NC_005877.1"/>
</dbReference>
<dbReference type="SMR" id="Q6KZQ5"/>
<dbReference type="FunCoup" id="Q6KZQ5">
    <property type="interactions" value="158"/>
</dbReference>
<dbReference type="STRING" id="263820.PTO1212"/>
<dbReference type="PaxDb" id="263820-PTO1212"/>
<dbReference type="GeneID" id="2844050"/>
<dbReference type="KEGG" id="pto:PTO1212"/>
<dbReference type="PATRIC" id="fig|263820.9.peg.1259"/>
<dbReference type="eggNOG" id="arCOG00078">
    <property type="taxonomic scope" value="Archaea"/>
</dbReference>
<dbReference type="HOGENOM" id="CLU_059055_2_0_2"/>
<dbReference type="InParanoid" id="Q6KZQ5"/>
<dbReference type="OrthoDB" id="6244at2157"/>
<dbReference type="Proteomes" id="UP000000438">
    <property type="component" value="Chromosome"/>
</dbReference>
<dbReference type="GO" id="GO:1990259">
    <property type="term" value="F:histone H2AQ104 methyltransferase activity"/>
    <property type="evidence" value="ECO:0007669"/>
    <property type="project" value="TreeGrafter"/>
</dbReference>
<dbReference type="GO" id="GO:0003723">
    <property type="term" value="F:RNA binding"/>
    <property type="evidence" value="ECO:0007669"/>
    <property type="project" value="UniProtKB-UniRule"/>
</dbReference>
<dbReference type="GO" id="GO:0008649">
    <property type="term" value="F:rRNA methyltransferase activity"/>
    <property type="evidence" value="ECO:0007669"/>
    <property type="project" value="TreeGrafter"/>
</dbReference>
<dbReference type="GO" id="GO:0000494">
    <property type="term" value="P:box C/D sno(s)RNA 3'-end processing"/>
    <property type="evidence" value="ECO:0007669"/>
    <property type="project" value="TreeGrafter"/>
</dbReference>
<dbReference type="GO" id="GO:0008033">
    <property type="term" value="P:tRNA processing"/>
    <property type="evidence" value="ECO:0007669"/>
    <property type="project" value="UniProtKB-UniRule"/>
</dbReference>
<dbReference type="Gene3D" id="3.40.50.150">
    <property type="entry name" value="Vaccinia Virus protein VP39"/>
    <property type="match status" value="1"/>
</dbReference>
<dbReference type="HAMAP" id="MF_00351">
    <property type="entry name" value="RNA_methyltransf_FlpA"/>
    <property type="match status" value="1"/>
</dbReference>
<dbReference type="InterPro" id="IPR000692">
    <property type="entry name" value="Fibrillarin"/>
</dbReference>
<dbReference type="InterPro" id="IPR029063">
    <property type="entry name" value="SAM-dependent_MTases_sf"/>
</dbReference>
<dbReference type="NCBIfam" id="NF003276">
    <property type="entry name" value="PRK04266.1-2"/>
    <property type="match status" value="1"/>
</dbReference>
<dbReference type="PANTHER" id="PTHR10335:SF17">
    <property type="entry name" value="FIBRILLARIN"/>
    <property type="match status" value="1"/>
</dbReference>
<dbReference type="PANTHER" id="PTHR10335">
    <property type="entry name" value="RRNA 2-O-METHYLTRANSFERASE FIBRILLARIN"/>
    <property type="match status" value="1"/>
</dbReference>
<dbReference type="Pfam" id="PF01269">
    <property type="entry name" value="Fibrillarin"/>
    <property type="match status" value="1"/>
</dbReference>
<dbReference type="PRINTS" id="PR00052">
    <property type="entry name" value="FIBRILLARIN"/>
</dbReference>
<dbReference type="SMART" id="SM01206">
    <property type="entry name" value="Fibrillarin"/>
    <property type="match status" value="1"/>
</dbReference>
<dbReference type="SUPFAM" id="SSF53335">
    <property type="entry name" value="S-adenosyl-L-methionine-dependent methyltransferases"/>
    <property type="match status" value="1"/>
</dbReference>